<sequence>MDVALEFLDPLILDKAYAWLLPSEPNVPDPTSRWDRDNVYRQVISILVLTQLGATSLYLFFSALSYYFVFDRRLEYHPRFLPNQVRQEIKSSLSAIPFINILTLPWFLAEVRGKSMLYRSVSDYGWPWLVVSSILYMAFNDIGIYWIHRLEHHPSVYKYIHKPHHKWIVPTPWAALAFHPLDGYVQSLPYQSVSLSPVAAILRAIPLTINSVFVFICPMQRHLYMVLFAAVQIWTILIHDGDMISGHWTEKFINSPAHHTLHHMYFTVNYGQYFTWADAYFGSHRAPEPALDPLHDALKVMRAKGLVDEQGNPIKKPKGE</sequence>
<gene>
    <name evidence="6" type="primary">erg3C</name>
    <name type="ORF">AFUA_8G01070</name>
</gene>
<organism>
    <name type="scientific">Aspergillus fumigatus (strain ATCC MYA-4609 / CBS 101355 / FGSC A1100 / Af293)</name>
    <name type="common">Neosartorya fumigata</name>
    <dbReference type="NCBI Taxonomy" id="330879"/>
    <lineage>
        <taxon>Eukaryota</taxon>
        <taxon>Fungi</taxon>
        <taxon>Dikarya</taxon>
        <taxon>Ascomycota</taxon>
        <taxon>Pezizomycotina</taxon>
        <taxon>Eurotiomycetes</taxon>
        <taxon>Eurotiomycetidae</taxon>
        <taxon>Eurotiales</taxon>
        <taxon>Aspergillaceae</taxon>
        <taxon>Aspergillus</taxon>
        <taxon>Aspergillus subgen. Fumigati</taxon>
    </lineage>
</organism>
<comment type="function">
    <text evidence="3 4 8 9">Delta(7)-sterol 5(6)-desaturase; part of the third module of ergosterol biosynthesis pathway that includes the late steps of the pathway (PubMed:16436696, PubMed:18191972). Erg3C is a minor delta(7)-sterol 5(6)-desaturase within the ergosterol pathway, erg3B being the major one (PubMed:16436696, PubMed:18191972). The third module or late pathway involves the ergosterol synthesis itself through consecutive reactions that mainly occur in the endoplasmic reticulum (ER) membrane. Firstly, the squalene synthase erg9 catalyzes the condensation of 2 farnesyl pyrophosphate moieties to form squalene, which is the precursor of all steroids. Squalene synthase is crucial for balancing the incorporation of farnesyl diphosphate (FPP) into sterol and nonsterol isoprene synthesis. Secondly, squalene is converted into lanosterol by the consecutive action of the squalene epoxidase erg1 and the lanosterol synthase erg7. Then, the delta(24)-sterol C-methyltransferase erg6 methylates lanosterol at C-24 to produce eburicol. Eburicol is the substrate of the sterol 14-alpha demethylase encoded by cyp51A and cyp51B, to yield 4,4,24-trimethyl ergosta-8,14,24(28)-trienol. The C-14 reductase erg24 then reduces the C14=C15 double bond which leads to 4,4-dimethylfecosterol. A sequence of further demethylations at C-4, involving the C-4 demethylation complex containing the C-4 methylsterol oxidases erg25A or erg25B, the sterol-4-alpha-carboxylate 3-dehydrogenase erg26 and the 3-keto-steroid reductase erg27, leads to the production of fecosterol via 4-methylfecosterol. The C-8 sterol isomerase erg2 then catalyzes the reaction which results in unsaturation at C-7 in the B ring of sterols and thus converts fecosterol to episterol. The sterol-C5-desaturase erg3B then catalyzes the introduction of a C-5 double bond in the B ring to produce 5-dehydroepisterol. The 2 other sterol-C5-desaturases, erg3A and erg3C, seem to be less important in ergosterol biosynthesis. The C-22 sterol desaturase erg5 further converts 5-dehydroepisterol into ergosta-5,7,22,24(28)-tetraen-3beta-ol by forming the C-22(23) double bond in the sterol side chain. Finally, ergosta-5,7,22,24(28)-tetraen-3beta-ol is substrate of the C-24(28) sterol reductases erg4A and erg4B to produce ergosterol. Possible alternative sterol biosynthetic pathways might exist from fecosterol to ergosterol, depending on the activities of the erg3 isoforms (Probable) (PubMed:16110826, PubMed:18191972).</text>
</comment>
<comment type="cofactor">
    <cofactor evidence="1">
        <name>Fe cation</name>
        <dbReference type="ChEBI" id="CHEBI:24875"/>
    </cofactor>
</comment>
<comment type="subcellular location">
    <subcellularLocation>
        <location evidence="7">Endoplasmic reticulum membrane</location>
        <topology evidence="2">Multi-pass membrane protein</topology>
    </subcellularLocation>
</comment>
<comment type="domain">
    <text evidence="1">The histidine box domains may contain the active site and/or be involved in metal ion binding.</text>
</comment>
<comment type="miscellaneous">
    <text evidence="9">In Aspergillus, the biosynthesis pathway of the sterol precursors leading to the prevalent sterol ergosterol differs from yeast. The ring system of lanosterol in S.cerevisiae is firstly demethylised in three enzymatic steps leading to the intermediate zymosterol and secondly a methyl group is added to zymosterol by the sterol 24-C-methyltransferase to form fecosterol. In Aspergillus, lanosterol is firstly transmethylated by the sterol 24-C-methyltransferase leading to the intermediate eburicol and secondly demethylated in three steps to form fecosterol.</text>
</comment>
<comment type="similarity">
    <text evidence="7">Belongs to the sterol desaturase family.</text>
</comment>
<protein>
    <recommendedName>
        <fullName evidence="5">Delta(7)-sterol 5(6)-desaturase erg3C</fullName>
        <ecNumber evidence="8">1.14.19.-</ecNumber>
    </recommendedName>
    <alternativeName>
        <fullName evidence="5">C-5 sterol desaturase erg3C</fullName>
    </alternativeName>
    <alternativeName>
        <fullName evidence="7">Ergosterol Delta(5,6) desaturase erg3C</fullName>
    </alternativeName>
    <alternativeName>
        <fullName evidence="6">Ergosterol biosynthesis protein 3C</fullName>
    </alternativeName>
    <alternativeName>
        <fullName evidence="7">Sterol-C5-desaturase erg3C</fullName>
    </alternativeName>
</protein>
<accession>Q4WB51</accession>
<dbReference type="EC" id="1.14.19.-" evidence="8"/>
<dbReference type="EMBL" id="AAHF01000014">
    <property type="protein sequence ID" value="EAL85061.1"/>
    <property type="molecule type" value="Genomic_DNA"/>
</dbReference>
<dbReference type="RefSeq" id="XP_747099.1">
    <property type="nucleotide sequence ID" value="XM_742006.1"/>
</dbReference>
<dbReference type="STRING" id="330879.Q4WB51"/>
<dbReference type="EnsemblFungi" id="EAL85061">
    <property type="protein sequence ID" value="EAL85061"/>
    <property type="gene ID" value="AFUA_8G01070"/>
</dbReference>
<dbReference type="GeneID" id="3504450"/>
<dbReference type="KEGG" id="afm:AFUA_8G01070"/>
<dbReference type="VEuPathDB" id="FungiDB:Afu8g01070"/>
<dbReference type="eggNOG" id="KOG0872">
    <property type="taxonomic scope" value="Eukaryota"/>
</dbReference>
<dbReference type="HOGENOM" id="CLU_047036_3_1_1"/>
<dbReference type="InParanoid" id="Q4WB51"/>
<dbReference type="OMA" id="FVFICPM"/>
<dbReference type="OrthoDB" id="6354873at2759"/>
<dbReference type="Proteomes" id="UP000002530">
    <property type="component" value="Chromosome 8"/>
</dbReference>
<dbReference type="GO" id="GO:0005789">
    <property type="term" value="C:endoplasmic reticulum membrane"/>
    <property type="evidence" value="ECO:0007669"/>
    <property type="project" value="UniProtKB-SubCell"/>
</dbReference>
<dbReference type="GO" id="GO:0016020">
    <property type="term" value="C:membrane"/>
    <property type="evidence" value="ECO:0000318"/>
    <property type="project" value="GO_Central"/>
</dbReference>
<dbReference type="GO" id="GO:0000248">
    <property type="term" value="F:C-5 sterol desaturase activity"/>
    <property type="evidence" value="ECO:0000318"/>
    <property type="project" value="GO_Central"/>
</dbReference>
<dbReference type="GO" id="GO:0005506">
    <property type="term" value="F:iron ion binding"/>
    <property type="evidence" value="ECO:0007669"/>
    <property type="project" value="InterPro"/>
</dbReference>
<dbReference type="GO" id="GO:0016126">
    <property type="term" value="P:sterol biosynthetic process"/>
    <property type="evidence" value="ECO:0000318"/>
    <property type="project" value="GO_Central"/>
</dbReference>
<dbReference type="InterPro" id="IPR006694">
    <property type="entry name" value="Fatty_acid_hydroxylase"/>
</dbReference>
<dbReference type="InterPro" id="IPR050307">
    <property type="entry name" value="Sterol_Desaturase_Related"/>
</dbReference>
<dbReference type="PANTHER" id="PTHR11863">
    <property type="entry name" value="STEROL DESATURASE"/>
    <property type="match status" value="1"/>
</dbReference>
<dbReference type="Pfam" id="PF04116">
    <property type="entry name" value="FA_hydroxylase"/>
    <property type="match status" value="1"/>
</dbReference>
<proteinExistence type="inferred from homology"/>
<reference key="1">
    <citation type="journal article" date="2005" name="Nature">
        <title>Genomic sequence of the pathogenic and allergenic filamentous fungus Aspergillus fumigatus.</title>
        <authorList>
            <person name="Nierman W.C."/>
            <person name="Pain A."/>
            <person name="Anderson M.J."/>
            <person name="Wortman J.R."/>
            <person name="Kim H.S."/>
            <person name="Arroyo J."/>
            <person name="Berriman M."/>
            <person name="Abe K."/>
            <person name="Archer D.B."/>
            <person name="Bermejo C."/>
            <person name="Bennett J.W."/>
            <person name="Bowyer P."/>
            <person name="Chen D."/>
            <person name="Collins M."/>
            <person name="Coulsen R."/>
            <person name="Davies R."/>
            <person name="Dyer P.S."/>
            <person name="Farman M.L."/>
            <person name="Fedorova N."/>
            <person name="Fedorova N.D."/>
            <person name="Feldblyum T.V."/>
            <person name="Fischer R."/>
            <person name="Fosker N."/>
            <person name="Fraser A."/>
            <person name="Garcia J.L."/>
            <person name="Garcia M.J."/>
            <person name="Goble A."/>
            <person name="Goldman G.H."/>
            <person name="Gomi K."/>
            <person name="Griffith-Jones S."/>
            <person name="Gwilliam R."/>
            <person name="Haas B.J."/>
            <person name="Haas H."/>
            <person name="Harris D.E."/>
            <person name="Horiuchi H."/>
            <person name="Huang J."/>
            <person name="Humphray S."/>
            <person name="Jimenez J."/>
            <person name="Keller N."/>
            <person name="Khouri H."/>
            <person name="Kitamoto K."/>
            <person name="Kobayashi T."/>
            <person name="Konzack S."/>
            <person name="Kulkarni R."/>
            <person name="Kumagai T."/>
            <person name="Lafton A."/>
            <person name="Latge J.-P."/>
            <person name="Li W."/>
            <person name="Lord A."/>
            <person name="Lu C."/>
            <person name="Majoros W.H."/>
            <person name="May G.S."/>
            <person name="Miller B.L."/>
            <person name="Mohamoud Y."/>
            <person name="Molina M."/>
            <person name="Monod M."/>
            <person name="Mouyna I."/>
            <person name="Mulligan S."/>
            <person name="Murphy L.D."/>
            <person name="O'Neil S."/>
            <person name="Paulsen I."/>
            <person name="Penalva M.A."/>
            <person name="Pertea M."/>
            <person name="Price C."/>
            <person name="Pritchard B.L."/>
            <person name="Quail M.A."/>
            <person name="Rabbinowitsch E."/>
            <person name="Rawlins N."/>
            <person name="Rajandream M.A."/>
            <person name="Reichard U."/>
            <person name="Renauld H."/>
            <person name="Robson G.D."/>
            <person name="Rodriguez de Cordoba S."/>
            <person name="Rodriguez-Pena J.M."/>
            <person name="Ronning C.M."/>
            <person name="Rutter S."/>
            <person name="Salzberg S.L."/>
            <person name="Sanchez M."/>
            <person name="Sanchez-Ferrero J.C."/>
            <person name="Saunders D."/>
            <person name="Seeger K."/>
            <person name="Squares R."/>
            <person name="Squares S."/>
            <person name="Takeuchi M."/>
            <person name="Tekaia F."/>
            <person name="Turner G."/>
            <person name="Vazquez de Aldana C.R."/>
            <person name="Weidman J."/>
            <person name="White O."/>
            <person name="Woodward J.R."/>
            <person name="Yu J.-H."/>
            <person name="Fraser C.M."/>
            <person name="Galagan J.E."/>
            <person name="Asai K."/>
            <person name="Machida M."/>
            <person name="Hall N."/>
            <person name="Barrell B.G."/>
            <person name="Denning D.W."/>
        </authorList>
    </citation>
    <scope>NUCLEOTIDE SEQUENCE [LARGE SCALE GENOMIC DNA]</scope>
    <source>
        <strain>ATCC MYA-4609 / CBS 101355 / FGSC A1100 / Af293</strain>
    </source>
</reference>
<reference key="2">
    <citation type="journal article" date="2005" name="Med. Mycol.">
        <title>The ergosterol biosynthesis pathway, transporter genes, and azole resistance in Aspergillus fumigatus.</title>
        <authorList>
            <person name="Ferreira M.E."/>
            <person name="Colombo A.L."/>
            <person name="Paulsen I."/>
            <person name="Ren Q."/>
            <person name="Wortman J."/>
            <person name="Huang J."/>
            <person name="Goldman M.H."/>
            <person name="Goldman G.H."/>
        </authorList>
    </citation>
    <scope>IDENTIFICATION</scope>
    <scope>FUNCTION</scope>
</reference>
<reference key="3">
    <citation type="journal article" date="2006" name="Antimicrob. Agents Chemother.">
        <title>Aspergillus fumigatus C-5 sterol desaturases Erg3A and Erg3B: role in sterol biosynthesis and antifungal drug susceptibility.</title>
        <authorList>
            <person name="Alcazar-Fuoli L."/>
            <person name="Mellado E."/>
            <person name="Garcia-Effron G."/>
            <person name="Buitrago M.J."/>
            <person name="Lopez J.F."/>
            <person name="Grimalt J.O."/>
            <person name="Cuenca-Estrella J.M."/>
            <person name="Rodriguez-Tudela J.L."/>
        </authorList>
    </citation>
    <scope>FUNCTION</scope>
</reference>
<reference key="4">
    <citation type="journal article" date="2008" name="Steroids">
        <title>Ergosterol biosynthesis pathway in Aspergillus fumigatus.</title>
        <authorList>
            <person name="Alcazar-Fuoli L."/>
            <person name="Mellado E."/>
            <person name="Garcia-Effron G."/>
            <person name="Lopez J.F."/>
            <person name="Grimalt J.O."/>
            <person name="Cuenca-Estrella J.M."/>
            <person name="Rodriguez-Tudela J.L."/>
        </authorList>
    </citation>
    <scope>FUNCTION</scope>
</reference>
<name>ERG3C_ASPFU</name>
<feature type="chain" id="PRO_0000454126" description="Delta(7)-sterol 5(6)-desaturase erg3C">
    <location>
        <begin position="1"/>
        <end position="320"/>
    </location>
</feature>
<feature type="transmembrane region" description="Helical" evidence="2">
    <location>
        <begin position="43"/>
        <end position="63"/>
    </location>
</feature>
<feature type="transmembrane region" description="Helical" evidence="2">
    <location>
        <begin position="91"/>
        <end position="111"/>
    </location>
</feature>
<feature type="transmembrane region" description="Helical" evidence="2">
    <location>
        <begin position="127"/>
        <end position="147"/>
    </location>
</feature>
<feature type="transmembrane region" description="Helical" evidence="2">
    <location>
        <begin position="224"/>
        <end position="244"/>
    </location>
</feature>
<feature type="domain" description="Fatty acid hydroxylase" evidence="2">
    <location>
        <begin position="134"/>
        <end position="283"/>
    </location>
</feature>
<feature type="short sequence motif" description="Histidine box-1" evidence="1">
    <location>
        <begin position="148"/>
        <end position="152"/>
    </location>
</feature>
<feature type="short sequence motif" description="Histidine box-2" evidence="1">
    <location>
        <begin position="161"/>
        <end position="165"/>
    </location>
</feature>
<feature type="short sequence motif" description="Histidine box-3" evidence="1">
    <location>
        <begin position="259"/>
        <end position="263"/>
    </location>
</feature>
<evidence type="ECO:0000250" key="1">
    <source>
        <dbReference type="UniProtKB" id="P53045"/>
    </source>
</evidence>
<evidence type="ECO:0000255" key="2"/>
<evidence type="ECO:0000269" key="3">
    <source>
    </source>
</evidence>
<evidence type="ECO:0000269" key="4">
    <source>
    </source>
</evidence>
<evidence type="ECO:0000303" key="5">
    <source>
    </source>
</evidence>
<evidence type="ECO:0000303" key="6">
    <source>
    </source>
</evidence>
<evidence type="ECO:0000305" key="7"/>
<evidence type="ECO:0000305" key="8">
    <source>
    </source>
</evidence>
<evidence type="ECO:0000305" key="9">
    <source>
    </source>
</evidence>
<keyword id="KW-0256">Endoplasmic reticulum</keyword>
<keyword id="KW-0444">Lipid biosynthesis</keyword>
<keyword id="KW-0443">Lipid metabolism</keyword>
<keyword id="KW-0472">Membrane</keyword>
<keyword id="KW-0560">Oxidoreductase</keyword>
<keyword id="KW-1185">Reference proteome</keyword>
<keyword id="KW-0752">Steroid biosynthesis</keyword>
<keyword id="KW-0753">Steroid metabolism</keyword>
<keyword id="KW-0756">Sterol biosynthesis</keyword>
<keyword id="KW-1207">Sterol metabolism</keyword>
<keyword id="KW-0812">Transmembrane</keyword>
<keyword id="KW-1133">Transmembrane helix</keyword>